<sequence length="662" mass="74813">MPLRDKYCQTDHHHHGCCEPVYILEPGDPPLLQQPVQTSKSGIQQIIECFRSGTKQLKHILLKDVDTIFECKLCRSLFRGLPNLITHKKFYCPPSLQMDDNLPDVNDKQSQAISDLLEAIYPRVDKREYIIKLEPIETNQNAVFQYISRTDNPAEVTESSSTPEQTEVQIQETSSEQLKAVPDADTEVEEAIEPPSIETVVDEAAAPTEEQPQESQADLETSDSSDLGHQLICCLCRKEFNSRRGVRRHIRKVHKKKMEELKKYIETRKTPNQSSKGRSKSVLVSLSRSCPVCCKSFATKANVRRHFDEVHRGLRRDSITPDIATKPGQPLFLDSASPKKSFKTRKQKSSKAEYNLTACKCLLCKRKYSSQIMLKRHMQIVHKITLSGANSKREKGPNNTANSSEVKVELADSVESSPPSITHSPQNELKGTNHSNEKKNTPATQKNKVKQDSESPKSASPSAAGGQQKTRKPKLSAGFDFKQLYCKLCKRQFTSKQNLTKHIELHTDGNNIYVKFYKCPLCTYETRRKRDVIRHITVVHKKSSRYLGKITASLEIRAIKKPIDFVLNKVAKRGPSREEAKHNDSKQDGTSNSPSKKYEVADVGIEVKVTKNFSLHRCNKCGKAFAKKTYLEHHKKTHKANATNSPEGNKTKGRSTRSKALV</sequence>
<name>ZN800_MOUSE</name>
<organism>
    <name type="scientific">Mus musculus</name>
    <name type="common">Mouse</name>
    <dbReference type="NCBI Taxonomy" id="10090"/>
    <lineage>
        <taxon>Eukaryota</taxon>
        <taxon>Metazoa</taxon>
        <taxon>Chordata</taxon>
        <taxon>Craniata</taxon>
        <taxon>Vertebrata</taxon>
        <taxon>Euteleostomi</taxon>
        <taxon>Mammalia</taxon>
        <taxon>Eutheria</taxon>
        <taxon>Euarchontoglires</taxon>
        <taxon>Glires</taxon>
        <taxon>Rodentia</taxon>
        <taxon>Myomorpha</taxon>
        <taxon>Muroidea</taxon>
        <taxon>Muridae</taxon>
        <taxon>Murinae</taxon>
        <taxon>Mus</taxon>
        <taxon>Mus</taxon>
    </lineage>
</organism>
<protein>
    <recommendedName>
        <fullName>Zinc finger protein 800</fullName>
    </recommendedName>
</protein>
<accession>Q0VEE6</accession>
<proteinExistence type="evidence at protein level"/>
<dbReference type="EMBL" id="BC119236">
    <property type="protein sequence ID" value="AAI19237.1"/>
    <property type="molecule type" value="mRNA"/>
</dbReference>
<dbReference type="EMBL" id="BC119262">
    <property type="protein sequence ID" value="AAI19263.1"/>
    <property type="molecule type" value="mRNA"/>
</dbReference>
<dbReference type="CCDS" id="CCDS39445.1"/>
<dbReference type="RefSeq" id="NP_001075147.1">
    <property type="nucleotide sequence ID" value="NM_001081678.1"/>
</dbReference>
<dbReference type="RefSeq" id="XP_006505214.1">
    <property type="nucleotide sequence ID" value="XM_006505151.1"/>
</dbReference>
<dbReference type="RefSeq" id="XP_006505215.1">
    <property type="nucleotide sequence ID" value="XM_006505152.3"/>
</dbReference>
<dbReference type="BioGRID" id="553137">
    <property type="interactions" value="1"/>
</dbReference>
<dbReference type="FunCoup" id="Q0VEE6">
    <property type="interactions" value="2878"/>
</dbReference>
<dbReference type="STRING" id="10090.ENSMUSP00000110975"/>
<dbReference type="iPTMnet" id="Q0VEE6"/>
<dbReference type="PhosphoSitePlus" id="Q0VEE6"/>
<dbReference type="jPOST" id="Q0VEE6"/>
<dbReference type="PaxDb" id="10090-ENSMUSP00000110976"/>
<dbReference type="ProteomicsDB" id="299603"/>
<dbReference type="Pumba" id="Q0VEE6"/>
<dbReference type="Antibodypedia" id="17720">
    <property type="antibodies" value="73 antibodies from 17 providers"/>
</dbReference>
<dbReference type="Ensembl" id="ENSMUST00000035930.11">
    <property type="protein sequence ID" value="ENSMUSP00000039222.5"/>
    <property type="gene ID" value="ENSMUSG00000039841.15"/>
</dbReference>
<dbReference type="Ensembl" id="ENSMUST00000115320.8">
    <property type="protein sequence ID" value="ENSMUSP00000110975.2"/>
    <property type="gene ID" value="ENSMUSG00000039841.15"/>
</dbReference>
<dbReference type="Ensembl" id="ENSMUST00000115321.9">
    <property type="protein sequence ID" value="ENSMUSP00000110976.3"/>
    <property type="gene ID" value="ENSMUSG00000039841.15"/>
</dbReference>
<dbReference type="GeneID" id="627049"/>
<dbReference type="KEGG" id="mmu:627049"/>
<dbReference type="UCSC" id="uc009bcm.1">
    <property type="organism name" value="mouse"/>
</dbReference>
<dbReference type="AGR" id="MGI:1889334"/>
<dbReference type="CTD" id="627049"/>
<dbReference type="MGI" id="MGI:1889334">
    <property type="gene designation" value="Zfp800"/>
</dbReference>
<dbReference type="VEuPathDB" id="HostDB:ENSMUSG00000039841"/>
<dbReference type="eggNOG" id="KOG1721">
    <property type="taxonomic scope" value="Eukaryota"/>
</dbReference>
<dbReference type="GeneTree" id="ENSGT00390000008140"/>
<dbReference type="HOGENOM" id="CLU_015050_0_0_1"/>
<dbReference type="InParanoid" id="Q0VEE6"/>
<dbReference type="OMA" id="SSCICHE"/>
<dbReference type="OrthoDB" id="10066279at2759"/>
<dbReference type="PhylomeDB" id="Q0VEE6"/>
<dbReference type="TreeFam" id="TF333197"/>
<dbReference type="BioGRID-ORCS" id="627049">
    <property type="hits" value="0 hits in 77 CRISPR screens"/>
</dbReference>
<dbReference type="ChiTaRS" id="Zfp800">
    <property type="organism name" value="mouse"/>
</dbReference>
<dbReference type="PRO" id="PR:Q0VEE6"/>
<dbReference type="Proteomes" id="UP000000589">
    <property type="component" value="Chromosome 6"/>
</dbReference>
<dbReference type="RNAct" id="Q0VEE6">
    <property type="molecule type" value="protein"/>
</dbReference>
<dbReference type="Bgee" id="ENSMUSG00000039841">
    <property type="expression patterns" value="Expressed in spermatocyte and 224 other cell types or tissues"/>
</dbReference>
<dbReference type="ExpressionAtlas" id="Q0VEE6">
    <property type="expression patterns" value="baseline and differential"/>
</dbReference>
<dbReference type="GO" id="GO:0005634">
    <property type="term" value="C:nucleus"/>
    <property type="evidence" value="ECO:0007669"/>
    <property type="project" value="UniProtKB-SubCell"/>
</dbReference>
<dbReference type="GO" id="GO:0003677">
    <property type="term" value="F:DNA binding"/>
    <property type="evidence" value="ECO:0007669"/>
    <property type="project" value="UniProtKB-KW"/>
</dbReference>
<dbReference type="GO" id="GO:0008270">
    <property type="term" value="F:zinc ion binding"/>
    <property type="evidence" value="ECO:0007669"/>
    <property type="project" value="UniProtKB-KW"/>
</dbReference>
<dbReference type="GO" id="GO:0090425">
    <property type="term" value="P:acinar cell differentiation"/>
    <property type="evidence" value="ECO:0000315"/>
    <property type="project" value="MGI"/>
</dbReference>
<dbReference type="GO" id="GO:0031018">
    <property type="term" value="P:endocrine pancreas development"/>
    <property type="evidence" value="ECO:0000315"/>
    <property type="project" value="MGI"/>
</dbReference>
<dbReference type="Gene3D" id="3.30.160.60">
    <property type="entry name" value="Classic Zinc Finger"/>
    <property type="match status" value="3"/>
</dbReference>
<dbReference type="InterPro" id="IPR041697">
    <property type="entry name" value="Znf-C2H2_11"/>
</dbReference>
<dbReference type="InterPro" id="IPR039149">
    <property type="entry name" value="ZNF800"/>
</dbReference>
<dbReference type="InterPro" id="IPR036236">
    <property type="entry name" value="Znf_C2H2_sf"/>
</dbReference>
<dbReference type="InterPro" id="IPR013087">
    <property type="entry name" value="Znf_C2H2_type"/>
</dbReference>
<dbReference type="PANTHER" id="PTHR21020">
    <property type="entry name" value="ZINC FINGER PROTEIN 800"/>
    <property type="match status" value="1"/>
</dbReference>
<dbReference type="PANTHER" id="PTHR21020:SF0">
    <property type="entry name" value="ZINC FINGER PROTEIN 800"/>
    <property type="match status" value="1"/>
</dbReference>
<dbReference type="Pfam" id="PF25445">
    <property type="entry name" value="CCHC_ZFPM2"/>
    <property type="match status" value="1"/>
</dbReference>
<dbReference type="Pfam" id="PF00096">
    <property type="entry name" value="zf-C2H2"/>
    <property type="match status" value="2"/>
</dbReference>
<dbReference type="Pfam" id="PF16622">
    <property type="entry name" value="zf-C2H2_11"/>
    <property type="match status" value="1"/>
</dbReference>
<dbReference type="Pfam" id="PF16624">
    <property type="entry name" value="zf-C2H2_assoc2"/>
    <property type="match status" value="1"/>
</dbReference>
<dbReference type="SMART" id="SM00355">
    <property type="entry name" value="ZnF_C2H2"/>
    <property type="match status" value="7"/>
</dbReference>
<dbReference type="SUPFAM" id="SSF57667">
    <property type="entry name" value="beta-beta-alpha zinc fingers"/>
    <property type="match status" value="4"/>
</dbReference>
<dbReference type="PROSITE" id="PS00028">
    <property type="entry name" value="ZINC_FINGER_C2H2_1"/>
    <property type="match status" value="5"/>
</dbReference>
<dbReference type="PROSITE" id="PS50157">
    <property type="entry name" value="ZINC_FINGER_C2H2_2"/>
    <property type="match status" value="4"/>
</dbReference>
<keyword id="KW-0238">DNA-binding</keyword>
<keyword id="KW-1017">Isopeptide bond</keyword>
<keyword id="KW-0479">Metal-binding</keyword>
<keyword id="KW-0539">Nucleus</keyword>
<keyword id="KW-0597">Phosphoprotein</keyword>
<keyword id="KW-1185">Reference proteome</keyword>
<keyword id="KW-0677">Repeat</keyword>
<keyword id="KW-0804">Transcription</keyword>
<keyword id="KW-0805">Transcription regulation</keyword>
<keyword id="KW-0832">Ubl conjugation</keyword>
<keyword id="KW-0862">Zinc</keyword>
<keyword id="KW-0863">Zinc-finger</keyword>
<reference key="1">
    <citation type="journal article" date="2004" name="Genome Res.">
        <title>The status, quality, and expansion of the NIH full-length cDNA project: the Mammalian Gene Collection (MGC).</title>
        <authorList>
            <consortium name="The MGC Project Team"/>
        </authorList>
    </citation>
    <scope>NUCLEOTIDE SEQUENCE [LARGE SCALE MRNA]</scope>
    <source>
        <tissue>Brain</tissue>
    </source>
</reference>
<reference key="2">
    <citation type="journal article" date="2007" name="Proc. Natl. Acad. Sci. U.S.A.">
        <title>Large-scale phosphorylation analysis of mouse liver.</title>
        <authorList>
            <person name="Villen J."/>
            <person name="Beausoleil S.A."/>
            <person name="Gerber S.A."/>
            <person name="Gygi S.P."/>
        </authorList>
    </citation>
    <scope>IDENTIFICATION BY MASS SPECTROMETRY [LARGE SCALE ANALYSIS]</scope>
    <source>
        <tissue>Liver</tissue>
    </source>
</reference>
<reference key="3">
    <citation type="journal article" date="2010" name="Cell">
        <title>A tissue-specific atlas of mouse protein phosphorylation and expression.</title>
        <authorList>
            <person name="Huttlin E.L."/>
            <person name="Jedrychowski M.P."/>
            <person name="Elias J.E."/>
            <person name="Goswami T."/>
            <person name="Rad R."/>
            <person name="Beausoleil S.A."/>
            <person name="Villen J."/>
            <person name="Haas W."/>
            <person name="Sowa M.E."/>
            <person name="Gygi S.P."/>
        </authorList>
    </citation>
    <scope>PHOSPHORYLATION [LARGE SCALE ANALYSIS] AT SER-318; SER-337; SER-420; SER-455; SER-458 AND SER-460</scope>
    <scope>IDENTIFICATION BY MASS SPECTROMETRY [LARGE SCALE ANALYSIS]</scope>
    <source>
        <tissue>Kidney</tissue>
        <tissue>Lung</tissue>
        <tissue>Spleen</tissue>
    </source>
</reference>
<feature type="chain" id="PRO_0000304411" description="Zinc finger protein 800">
    <location>
        <begin position="1"/>
        <end position="662"/>
    </location>
</feature>
<feature type="zinc finger region" description="C2H2-type 1; degenerate" evidence="2">
    <location>
        <begin position="69"/>
        <end position="91"/>
    </location>
</feature>
<feature type="zinc finger region" description="C2H2-type 2" evidence="2">
    <location>
        <begin position="231"/>
        <end position="254"/>
    </location>
</feature>
<feature type="zinc finger region" description="C2H2-type 3" evidence="2">
    <location>
        <begin position="288"/>
        <end position="311"/>
    </location>
</feature>
<feature type="zinc finger region" description="C2H2-type 4" evidence="2">
    <location>
        <begin position="357"/>
        <end position="382"/>
    </location>
</feature>
<feature type="zinc finger region" description="C2H2-type 5" evidence="2">
    <location>
        <begin position="484"/>
        <end position="506"/>
    </location>
</feature>
<feature type="zinc finger region" description="C2H2-type 6" evidence="2">
    <location>
        <begin position="517"/>
        <end position="540"/>
    </location>
</feature>
<feature type="zinc finger region" description="C2H2-type 7" evidence="2">
    <location>
        <begin position="616"/>
        <end position="638"/>
    </location>
</feature>
<feature type="region of interest" description="Disordered" evidence="3">
    <location>
        <begin position="172"/>
        <end position="197"/>
    </location>
</feature>
<feature type="region of interest" description="Disordered" evidence="3">
    <location>
        <begin position="205"/>
        <end position="224"/>
    </location>
</feature>
<feature type="region of interest" description="Disordered" evidence="3">
    <location>
        <begin position="319"/>
        <end position="349"/>
    </location>
</feature>
<feature type="region of interest" description="Disordered" evidence="3">
    <location>
        <begin position="389"/>
        <end position="473"/>
    </location>
</feature>
<feature type="region of interest" description="Disordered" evidence="3">
    <location>
        <begin position="573"/>
        <end position="597"/>
    </location>
</feature>
<feature type="region of interest" description="Disordered" evidence="3">
    <location>
        <begin position="633"/>
        <end position="662"/>
    </location>
</feature>
<feature type="compositionally biased region" description="Low complexity" evidence="3">
    <location>
        <begin position="205"/>
        <end position="216"/>
    </location>
</feature>
<feature type="compositionally biased region" description="Basic residues" evidence="3">
    <location>
        <begin position="340"/>
        <end position="349"/>
    </location>
</feature>
<feature type="compositionally biased region" description="Polar residues" evidence="3">
    <location>
        <begin position="414"/>
        <end position="434"/>
    </location>
</feature>
<feature type="compositionally biased region" description="Low complexity" evidence="3">
    <location>
        <begin position="456"/>
        <end position="468"/>
    </location>
</feature>
<feature type="compositionally biased region" description="Basic and acidic residues" evidence="3">
    <location>
        <begin position="575"/>
        <end position="587"/>
    </location>
</feature>
<feature type="compositionally biased region" description="Basic residues" evidence="3">
    <location>
        <begin position="651"/>
        <end position="662"/>
    </location>
</feature>
<feature type="modified residue" description="Phosphoserine" evidence="5">
    <location>
        <position position="318"/>
    </location>
</feature>
<feature type="modified residue" description="Phosphothreonine" evidence="1">
    <location>
        <position position="320"/>
    </location>
</feature>
<feature type="modified residue" description="Phosphoserine" evidence="5">
    <location>
        <position position="337"/>
    </location>
</feature>
<feature type="modified residue" description="Phosphoserine" evidence="5">
    <location>
        <position position="420"/>
    </location>
</feature>
<feature type="modified residue" description="Phosphoserine" evidence="1">
    <location>
        <position position="424"/>
    </location>
</feature>
<feature type="modified residue" description="Phosphoserine" evidence="1">
    <location>
        <position position="453"/>
    </location>
</feature>
<feature type="modified residue" description="Phosphoserine" evidence="5">
    <location>
        <position position="455"/>
    </location>
</feature>
<feature type="modified residue" description="Phosphoserine" evidence="5">
    <location>
        <position position="458"/>
    </location>
</feature>
<feature type="modified residue" description="Phosphoserine" evidence="5">
    <location>
        <position position="460"/>
    </location>
</feature>
<feature type="cross-link" description="Glycyl lysine isopeptide (Lys-Gly) (interchain with G-Cter in SUMO2)" evidence="1">
    <location>
        <position position="132"/>
    </location>
</feature>
<feature type="cross-link" description="Glycyl lysine isopeptide (Lys-Gly) (interchain with G-Cter in SUMO2)" evidence="1">
    <location>
        <position position="280"/>
    </location>
</feature>
<feature type="cross-link" description="Glycyl lysine isopeptide (Lys-Gly) (interchain with G-Cter in SUMO2)" evidence="1">
    <location>
        <position position="392"/>
    </location>
</feature>
<feature type="cross-link" description="Glycyl lysine isopeptide (Lys-Gly) (interchain with G-Cter in SUMO2)" evidence="1">
    <location>
        <position position="474"/>
    </location>
</feature>
<feature type="cross-link" description="Glycyl lysine isopeptide (Lys-Gly) (interchain with G-Cter in SUMO2)" evidence="1">
    <location>
        <position position="597"/>
    </location>
</feature>
<comment type="function">
    <text>May be involved in transcriptional regulation.</text>
</comment>
<comment type="subcellular location">
    <subcellularLocation>
        <location evidence="4">Nucleus</location>
    </subcellularLocation>
</comment>
<comment type="similarity">
    <text evidence="4">Belongs to the krueppel C2H2-type zinc-finger protein family.</text>
</comment>
<evidence type="ECO:0000250" key="1">
    <source>
        <dbReference type="UniProtKB" id="Q2TB10"/>
    </source>
</evidence>
<evidence type="ECO:0000255" key="2">
    <source>
        <dbReference type="PROSITE-ProRule" id="PRU00042"/>
    </source>
</evidence>
<evidence type="ECO:0000256" key="3">
    <source>
        <dbReference type="SAM" id="MobiDB-lite"/>
    </source>
</evidence>
<evidence type="ECO:0000305" key="4"/>
<evidence type="ECO:0007744" key="5">
    <source>
    </source>
</evidence>
<gene>
    <name type="primary">Znf800</name>
    <name type="synonym">Zfp800</name>
</gene>